<sequence>MEPRTGDAADPRGSRGGRGPSPLAGPSARQLLARLDARPLAARAAVDVAALVRRAGATLRLRRKEAVSVLDSADIEVTDSRLPHATIVDHRPQHRWLETCNAPPQLIQGKARSAPKPSQASGHFSVELVRGYAGFGLTLGGGRDVAGDTPLAVRGLLKDGPAQRCGRLEVGDLVLHINGESTQGLTHAQAVERIRAGGPQLHLVIRRPLETHPGKPRGVGEPRKGVVPSWPDRSPDPGGPEVTGSRSSSTSLVQHPPSRTTLKKTRGSPEPSPEAAADGPTVSPPERRAEDPNDQIPGSPGPWLVPSEERLSRALGVRGAAQLAQEMAAGRRRH</sequence>
<feature type="chain" id="PRO_0000310542" description="PDZ domain-containing protein MAGIX">
    <location>
        <begin position="1"/>
        <end position="334"/>
    </location>
</feature>
<feature type="domain" description="PDZ" evidence="2">
    <location>
        <begin position="125"/>
        <end position="209"/>
    </location>
</feature>
<feature type="region of interest" description="Disordered" evidence="3">
    <location>
        <begin position="1"/>
        <end position="26"/>
    </location>
</feature>
<feature type="region of interest" description="Disordered" evidence="3">
    <location>
        <begin position="209"/>
        <end position="306"/>
    </location>
</feature>
<feature type="compositionally biased region" description="Basic and acidic residues" evidence="3">
    <location>
        <begin position="1"/>
        <end position="13"/>
    </location>
</feature>
<feature type="compositionally biased region" description="Basic and acidic residues" evidence="3">
    <location>
        <begin position="209"/>
        <end position="224"/>
    </location>
</feature>
<feature type="compositionally biased region" description="Polar residues" evidence="3">
    <location>
        <begin position="244"/>
        <end position="260"/>
    </location>
</feature>
<feature type="modified residue" description="Phosphoserine" evidence="1">
    <location>
        <position position="272"/>
    </location>
</feature>
<feature type="splice variant" id="VSP_029319" description="In isoform 2 and isoform 3." evidence="4 5">
    <original>MEPRTGDAADPRGSRGGRGPSPLAGPSARQLLARLDARPLAARAAVDVAALVRRAGATLRLRRKEAVSVLDSADIEVTDSRLPHATIVDHRP</original>
    <variation>MPLLWITGPRYHLILLSEASCLRANYVHLCPLF</variation>
    <location>
        <begin position="1"/>
        <end position="92"/>
    </location>
</feature>
<feature type="splice variant" id="VSP_029320" description="In isoform 3." evidence="5">
    <location>
        <begin position="227"/>
        <end position="231"/>
    </location>
</feature>
<feature type="sequence variant" id="VAR_037075" description="In dbSNP:rs5906744.">
    <original>R</original>
    <variation>H</variation>
    <location>
        <position position="53"/>
    </location>
</feature>
<feature type="sequence variant" id="VAR_047035" description="In dbSNP:rs5906744.">
    <original>R</original>
    <variation>H</variation>
    <location>
        <position position="112"/>
    </location>
</feature>
<feature type="sequence variant" id="VAR_047036" description="In dbSNP:rs5905720.">
    <original>L</original>
    <variation>V</variation>
    <location>
        <position position="173"/>
    </location>
</feature>
<feature type="sequence variant" id="VAR_047037" description="In dbSNP:rs4824462.">
    <original>L</original>
    <variation>F</variation>
    <location>
        <position position="323"/>
    </location>
</feature>
<feature type="strand" evidence="6">
    <location>
        <begin position="124"/>
        <end position="129"/>
    </location>
</feature>
<feature type="strand" evidence="6">
    <location>
        <begin position="132"/>
        <end position="134"/>
    </location>
</feature>
<feature type="strand" evidence="6">
    <location>
        <begin position="137"/>
        <end position="140"/>
    </location>
</feature>
<feature type="strand" evidence="6">
    <location>
        <begin position="152"/>
        <end position="156"/>
    </location>
</feature>
<feature type="helix" evidence="6">
    <location>
        <begin position="161"/>
        <end position="165"/>
    </location>
</feature>
<feature type="strand" evidence="6">
    <location>
        <begin position="173"/>
        <end position="177"/>
    </location>
</feature>
<feature type="helix" evidence="6">
    <location>
        <begin position="187"/>
        <end position="196"/>
    </location>
</feature>
<feature type="strand" evidence="6">
    <location>
        <begin position="199"/>
        <end position="205"/>
    </location>
</feature>
<comment type="alternative products">
    <event type="alternative splicing"/>
    <isoform>
        <id>Q9H6Y5-1</id>
        <name>1</name>
        <sequence type="displayed"/>
    </isoform>
    <isoform>
        <id>Q9H6Y5-2</id>
        <name>2</name>
        <sequence type="described" ref="VSP_029319"/>
    </isoform>
    <isoform>
        <id>Q9H6Y5-3</id>
        <name>3</name>
        <sequence type="described" ref="VSP_029319 VSP_029320"/>
    </isoform>
</comment>
<proteinExistence type="evidence at protein level"/>
<reference key="1">
    <citation type="submission" date="2006-07" db="EMBL/GenBank/DDBJ databases">
        <title>A computer system platform used to predict novel genes.</title>
        <authorList>
            <person name="Yu Z."/>
            <person name="Zheng Z."/>
            <person name="Tang T."/>
            <person name="Fu Y."/>
        </authorList>
    </citation>
    <scope>NUCLEOTIDE SEQUENCE [MRNA] (ISOFORM 3)</scope>
</reference>
<reference key="2">
    <citation type="journal article" date="2004" name="Nat. Genet.">
        <title>Complete sequencing and characterization of 21,243 full-length human cDNAs.</title>
        <authorList>
            <person name="Ota T."/>
            <person name="Suzuki Y."/>
            <person name="Nishikawa T."/>
            <person name="Otsuki T."/>
            <person name="Sugiyama T."/>
            <person name="Irie R."/>
            <person name="Wakamatsu A."/>
            <person name="Hayashi K."/>
            <person name="Sato H."/>
            <person name="Nagai K."/>
            <person name="Kimura K."/>
            <person name="Makita H."/>
            <person name="Sekine M."/>
            <person name="Obayashi M."/>
            <person name="Nishi T."/>
            <person name="Shibahara T."/>
            <person name="Tanaka T."/>
            <person name="Ishii S."/>
            <person name="Yamamoto J."/>
            <person name="Saito K."/>
            <person name="Kawai Y."/>
            <person name="Isono Y."/>
            <person name="Nakamura Y."/>
            <person name="Nagahari K."/>
            <person name="Murakami K."/>
            <person name="Yasuda T."/>
            <person name="Iwayanagi T."/>
            <person name="Wagatsuma M."/>
            <person name="Shiratori A."/>
            <person name="Sudo H."/>
            <person name="Hosoiri T."/>
            <person name="Kaku Y."/>
            <person name="Kodaira H."/>
            <person name="Kondo H."/>
            <person name="Sugawara M."/>
            <person name="Takahashi M."/>
            <person name="Kanda K."/>
            <person name="Yokoi T."/>
            <person name="Furuya T."/>
            <person name="Kikkawa E."/>
            <person name="Omura Y."/>
            <person name="Abe K."/>
            <person name="Kamihara K."/>
            <person name="Katsuta N."/>
            <person name="Sato K."/>
            <person name="Tanikawa M."/>
            <person name="Yamazaki M."/>
            <person name="Ninomiya K."/>
            <person name="Ishibashi T."/>
            <person name="Yamashita H."/>
            <person name="Murakawa K."/>
            <person name="Fujimori K."/>
            <person name="Tanai H."/>
            <person name="Kimata M."/>
            <person name="Watanabe M."/>
            <person name="Hiraoka S."/>
            <person name="Chiba Y."/>
            <person name="Ishida S."/>
            <person name="Ono Y."/>
            <person name="Takiguchi S."/>
            <person name="Watanabe S."/>
            <person name="Yosida M."/>
            <person name="Hotuta T."/>
            <person name="Kusano J."/>
            <person name="Kanehori K."/>
            <person name="Takahashi-Fujii A."/>
            <person name="Hara H."/>
            <person name="Tanase T.-O."/>
            <person name="Nomura Y."/>
            <person name="Togiya S."/>
            <person name="Komai F."/>
            <person name="Hara R."/>
            <person name="Takeuchi K."/>
            <person name="Arita M."/>
            <person name="Imose N."/>
            <person name="Musashino K."/>
            <person name="Yuuki H."/>
            <person name="Oshima A."/>
            <person name="Sasaki N."/>
            <person name="Aotsuka S."/>
            <person name="Yoshikawa Y."/>
            <person name="Matsunawa H."/>
            <person name="Ichihara T."/>
            <person name="Shiohata N."/>
            <person name="Sano S."/>
            <person name="Moriya S."/>
            <person name="Momiyama H."/>
            <person name="Satoh N."/>
            <person name="Takami S."/>
            <person name="Terashima Y."/>
            <person name="Suzuki O."/>
            <person name="Nakagawa S."/>
            <person name="Senoh A."/>
            <person name="Mizoguchi H."/>
            <person name="Goto Y."/>
            <person name="Shimizu F."/>
            <person name="Wakebe H."/>
            <person name="Hishigaki H."/>
            <person name="Watanabe T."/>
            <person name="Sugiyama A."/>
            <person name="Takemoto M."/>
            <person name="Kawakami B."/>
            <person name="Yamazaki M."/>
            <person name="Watanabe K."/>
            <person name="Kumagai A."/>
            <person name="Itakura S."/>
            <person name="Fukuzumi Y."/>
            <person name="Fujimori Y."/>
            <person name="Komiyama M."/>
            <person name="Tashiro H."/>
            <person name="Tanigami A."/>
            <person name="Fujiwara T."/>
            <person name="Ono T."/>
            <person name="Yamada K."/>
            <person name="Fujii Y."/>
            <person name="Ozaki K."/>
            <person name="Hirao M."/>
            <person name="Ohmori Y."/>
            <person name="Kawabata A."/>
            <person name="Hikiji T."/>
            <person name="Kobatake N."/>
            <person name="Inagaki H."/>
            <person name="Ikema Y."/>
            <person name="Okamoto S."/>
            <person name="Okitani R."/>
            <person name="Kawakami T."/>
            <person name="Noguchi S."/>
            <person name="Itoh T."/>
            <person name="Shigeta K."/>
            <person name="Senba T."/>
            <person name="Matsumura K."/>
            <person name="Nakajima Y."/>
            <person name="Mizuno T."/>
            <person name="Morinaga M."/>
            <person name="Sasaki M."/>
            <person name="Togashi T."/>
            <person name="Oyama M."/>
            <person name="Hata H."/>
            <person name="Watanabe M."/>
            <person name="Komatsu T."/>
            <person name="Mizushima-Sugano J."/>
            <person name="Satoh T."/>
            <person name="Shirai Y."/>
            <person name="Takahashi Y."/>
            <person name="Nakagawa K."/>
            <person name="Okumura K."/>
            <person name="Nagase T."/>
            <person name="Nomura N."/>
            <person name="Kikuchi H."/>
            <person name="Masuho Y."/>
            <person name="Yamashita R."/>
            <person name="Nakai K."/>
            <person name="Yada T."/>
            <person name="Nakamura Y."/>
            <person name="Ohara O."/>
            <person name="Isogai T."/>
            <person name="Sugano S."/>
        </authorList>
    </citation>
    <scope>NUCLEOTIDE SEQUENCE [LARGE SCALE MRNA] (ISOFORM 2)</scope>
    <source>
        <tissue>Colon</tissue>
    </source>
</reference>
<reference key="3">
    <citation type="journal article" date="2005" name="Nature">
        <title>The DNA sequence of the human X chromosome.</title>
        <authorList>
            <person name="Ross M.T."/>
            <person name="Grafham D.V."/>
            <person name="Coffey A.J."/>
            <person name="Scherer S."/>
            <person name="McLay K."/>
            <person name="Muzny D."/>
            <person name="Platzer M."/>
            <person name="Howell G.R."/>
            <person name="Burrows C."/>
            <person name="Bird C.P."/>
            <person name="Frankish A."/>
            <person name="Lovell F.L."/>
            <person name="Howe K.L."/>
            <person name="Ashurst J.L."/>
            <person name="Fulton R.S."/>
            <person name="Sudbrak R."/>
            <person name="Wen G."/>
            <person name="Jones M.C."/>
            <person name="Hurles M.E."/>
            <person name="Andrews T.D."/>
            <person name="Scott C.E."/>
            <person name="Searle S."/>
            <person name="Ramser J."/>
            <person name="Whittaker A."/>
            <person name="Deadman R."/>
            <person name="Carter N.P."/>
            <person name="Hunt S.E."/>
            <person name="Chen R."/>
            <person name="Cree A."/>
            <person name="Gunaratne P."/>
            <person name="Havlak P."/>
            <person name="Hodgson A."/>
            <person name="Metzker M.L."/>
            <person name="Richards S."/>
            <person name="Scott G."/>
            <person name="Steffen D."/>
            <person name="Sodergren E."/>
            <person name="Wheeler D.A."/>
            <person name="Worley K.C."/>
            <person name="Ainscough R."/>
            <person name="Ambrose K.D."/>
            <person name="Ansari-Lari M.A."/>
            <person name="Aradhya S."/>
            <person name="Ashwell R.I."/>
            <person name="Babbage A.K."/>
            <person name="Bagguley C.L."/>
            <person name="Ballabio A."/>
            <person name="Banerjee R."/>
            <person name="Barker G.E."/>
            <person name="Barlow K.F."/>
            <person name="Barrett I.P."/>
            <person name="Bates K.N."/>
            <person name="Beare D.M."/>
            <person name="Beasley H."/>
            <person name="Beasley O."/>
            <person name="Beck A."/>
            <person name="Bethel G."/>
            <person name="Blechschmidt K."/>
            <person name="Brady N."/>
            <person name="Bray-Allen S."/>
            <person name="Bridgeman A.M."/>
            <person name="Brown A.J."/>
            <person name="Brown M.J."/>
            <person name="Bonnin D."/>
            <person name="Bruford E.A."/>
            <person name="Buhay C."/>
            <person name="Burch P."/>
            <person name="Burford D."/>
            <person name="Burgess J."/>
            <person name="Burrill W."/>
            <person name="Burton J."/>
            <person name="Bye J.M."/>
            <person name="Carder C."/>
            <person name="Carrel L."/>
            <person name="Chako J."/>
            <person name="Chapman J.C."/>
            <person name="Chavez D."/>
            <person name="Chen E."/>
            <person name="Chen G."/>
            <person name="Chen Y."/>
            <person name="Chen Z."/>
            <person name="Chinault C."/>
            <person name="Ciccodicola A."/>
            <person name="Clark S.Y."/>
            <person name="Clarke G."/>
            <person name="Clee C.M."/>
            <person name="Clegg S."/>
            <person name="Clerc-Blankenburg K."/>
            <person name="Clifford K."/>
            <person name="Cobley V."/>
            <person name="Cole C.G."/>
            <person name="Conquer J.S."/>
            <person name="Corby N."/>
            <person name="Connor R.E."/>
            <person name="David R."/>
            <person name="Davies J."/>
            <person name="Davis C."/>
            <person name="Davis J."/>
            <person name="Delgado O."/>
            <person name="Deshazo D."/>
            <person name="Dhami P."/>
            <person name="Ding Y."/>
            <person name="Dinh H."/>
            <person name="Dodsworth S."/>
            <person name="Draper H."/>
            <person name="Dugan-Rocha S."/>
            <person name="Dunham A."/>
            <person name="Dunn M."/>
            <person name="Durbin K.J."/>
            <person name="Dutta I."/>
            <person name="Eades T."/>
            <person name="Ellwood M."/>
            <person name="Emery-Cohen A."/>
            <person name="Errington H."/>
            <person name="Evans K.L."/>
            <person name="Faulkner L."/>
            <person name="Francis F."/>
            <person name="Frankland J."/>
            <person name="Fraser A.E."/>
            <person name="Galgoczy P."/>
            <person name="Gilbert J."/>
            <person name="Gill R."/>
            <person name="Gloeckner G."/>
            <person name="Gregory S.G."/>
            <person name="Gribble S."/>
            <person name="Griffiths C."/>
            <person name="Grocock R."/>
            <person name="Gu Y."/>
            <person name="Gwilliam R."/>
            <person name="Hamilton C."/>
            <person name="Hart E.A."/>
            <person name="Hawes A."/>
            <person name="Heath P.D."/>
            <person name="Heitmann K."/>
            <person name="Hennig S."/>
            <person name="Hernandez J."/>
            <person name="Hinzmann B."/>
            <person name="Ho S."/>
            <person name="Hoffs M."/>
            <person name="Howden P.J."/>
            <person name="Huckle E.J."/>
            <person name="Hume J."/>
            <person name="Hunt P.J."/>
            <person name="Hunt A.R."/>
            <person name="Isherwood J."/>
            <person name="Jacob L."/>
            <person name="Johnson D."/>
            <person name="Jones S."/>
            <person name="de Jong P.J."/>
            <person name="Joseph S.S."/>
            <person name="Keenan S."/>
            <person name="Kelly S."/>
            <person name="Kershaw J.K."/>
            <person name="Khan Z."/>
            <person name="Kioschis P."/>
            <person name="Klages S."/>
            <person name="Knights A.J."/>
            <person name="Kosiura A."/>
            <person name="Kovar-Smith C."/>
            <person name="Laird G.K."/>
            <person name="Langford C."/>
            <person name="Lawlor S."/>
            <person name="Leversha M."/>
            <person name="Lewis L."/>
            <person name="Liu W."/>
            <person name="Lloyd C."/>
            <person name="Lloyd D.M."/>
            <person name="Loulseged H."/>
            <person name="Loveland J.E."/>
            <person name="Lovell J.D."/>
            <person name="Lozado R."/>
            <person name="Lu J."/>
            <person name="Lyne R."/>
            <person name="Ma J."/>
            <person name="Maheshwari M."/>
            <person name="Matthews L.H."/>
            <person name="McDowall J."/>
            <person name="McLaren S."/>
            <person name="McMurray A."/>
            <person name="Meidl P."/>
            <person name="Meitinger T."/>
            <person name="Milne S."/>
            <person name="Miner G."/>
            <person name="Mistry S.L."/>
            <person name="Morgan M."/>
            <person name="Morris S."/>
            <person name="Mueller I."/>
            <person name="Mullikin J.C."/>
            <person name="Nguyen N."/>
            <person name="Nordsiek G."/>
            <person name="Nyakatura G."/>
            <person name="O'dell C.N."/>
            <person name="Okwuonu G."/>
            <person name="Palmer S."/>
            <person name="Pandian R."/>
            <person name="Parker D."/>
            <person name="Parrish J."/>
            <person name="Pasternak S."/>
            <person name="Patel D."/>
            <person name="Pearce A.V."/>
            <person name="Pearson D.M."/>
            <person name="Pelan S.E."/>
            <person name="Perez L."/>
            <person name="Porter K.M."/>
            <person name="Ramsey Y."/>
            <person name="Reichwald K."/>
            <person name="Rhodes S."/>
            <person name="Ridler K.A."/>
            <person name="Schlessinger D."/>
            <person name="Schueler M.G."/>
            <person name="Sehra H.K."/>
            <person name="Shaw-Smith C."/>
            <person name="Shen H."/>
            <person name="Sheridan E.M."/>
            <person name="Shownkeen R."/>
            <person name="Skuce C.D."/>
            <person name="Smith M.L."/>
            <person name="Sotheran E.C."/>
            <person name="Steingruber H.E."/>
            <person name="Steward C.A."/>
            <person name="Storey R."/>
            <person name="Swann R.M."/>
            <person name="Swarbreck D."/>
            <person name="Tabor P.E."/>
            <person name="Taudien S."/>
            <person name="Taylor T."/>
            <person name="Teague B."/>
            <person name="Thomas K."/>
            <person name="Thorpe A."/>
            <person name="Timms K."/>
            <person name="Tracey A."/>
            <person name="Trevanion S."/>
            <person name="Tromans A.C."/>
            <person name="d'Urso M."/>
            <person name="Verduzco D."/>
            <person name="Villasana D."/>
            <person name="Waldron L."/>
            <person name="Wall M."/>
            <person name="Wang Q."/>
            <person name="Warren J."/>
            <person name="Warry G.L."/>
            <person name="Wei X."/>
            <person name="West A."/>
            <person name="Whitehead S.L."/>
            <person name="Whiteley M.N."/>
            <person name="Wilkinson J.E."/>
            <person name="Willey D.L."/>
            <person name="Williams G."/>
            <person name="Williams L."/>
            <person name="Williamson A."/>
            <person name="Williamson H."/>
            <person name="Wilming L."/>
            <person name="Woodmansey R.L."/>
            <person name="Wray P.W."/>
            <person name="Yen J."/>
            <person name="Zhang J."/>
            <person name="Zhou J."/>
            <person name="Zoghbi H."/>
            <person name="Zorilla S."/>
            <person name="Buck D."/>
            <person name="Reinhardt R."/>
            <person name="Poustka A."/>
            <person name="Rosenthal A."/>
            <person name="Lehrach H."/>
            <person name="Meindl A."/>
            <person name="Minx P.J."/>
            <person name="Hillier L.W."/>
            <person name="Willard H.F."/>
            <person name="Wilson R.K."/>
            <person name="Waterston R.H."/>
            <person name="Rice C.M."/>
            <person name="Vaudin M."/>
            <person name="Coulson A."/>
            <person name="Nelson D.L."/>
            <person name="Weinstock G."/>
            <person name="Sulston J.E."/>
            <person name="Durbin R.M."/>
            <person name="Hubbard T."/>
            <person name="Gibbs R.A."/>
            <person name="Beck S."/>
            <person name="Rogers J."/>
            <person name="Bentley D.R."/>
        </authorList>
    </citation>
    <scope>NUCLEOTIDE SEQUENCE [LARGE SCALE GENOMIC DNA]</scope>
</reference>
<reference key="4">
    <citation type="submission" date="2005-07" db="EMBL/GenBank/DDBJ databases">
        <authorList>
            <person name="Mural R.J."/>
            <person name="Istrail S."/>
            <person name="Sutton G.G."/>
            <person name="Florea L."/>
            <person name="Halpern A.L."/>
            <person name="Mobarry C.M."/>
            <person name="Lippert R."/>
            <person name="Walenz B."/>
            <person name="Shatkay H."/>
            <person name="Dew I."/>
            <person name="Miller J.R."/>
            <person name="Flanigan M.J."/>
            <person name="Edwards N.J."/>
            <person name="Bolanos R."/>
            <person name="Fasulo D."/>
            <person name="Halldorsson B.V."/>
            <person name="Hannenhalli S."/>
            <person name="Turner R."/>
            <person name="Yooseph S."/>
            <person name="Lu F."/>
            <person name="Nusskern D.R."/>
            <person name="Shue B.C."/>
            <person name="Zheng X.H."/>
            <person name="Zhong F."/>
            <person name="Delcher A.L."/>
            <person name="Huson D.H."/>
            <person name="Kravitz S.A."/>
            <person name="Mouchard L."/>
            <person name="Reinert K."/>
            <person name="Remington K.A."/>
            <person name="Clark A.G."/>
            <person name="Waterman M.S."/>
            <person name="Eichler E.E."/>
            <person name="Adams M.D."/>
            <person name="Hunkapiller M.W."/>
            <person name="Myers E.W."/>
            <person name="Venter J.C."/>
        </authorList>
    </citation>
    <scope>NUCLEOTIDE SEQUENCE [LARGE SCALE GENOMIC DNA]</scope>
</reference>
<reference key="5">
    <citation type="journal article" date="2014" name="J. Proteomics">
        <title>An enzyme assisted RP-RPLC approach for in-depth analysis of human liver phosphoproteome.</title>
        <authorList>
            <person name="Bian Y."/>
            <person name="Song C."/>
            <person name="Cheng K."/>
            <person name="Dong M."/>
            <person name="Wang F."/>
            <person name="Huang J."/>
            <person name="Sun D."/>
            <person name="Wang L."/>
            <person name="Ye M."/>
            <person name="Zou H."/>
        </authorList>
    </citation>
    <scope>IDENTIFICATION BY MASS SPECTROMETRY [LARGE SCALE ANALYSIS]</scope>
    <source>
        <tissue>Liver</tissue>
    </source>
</reference>
<reference key="6">
    <citation type="submission" date="2006-10" db="PDB data bank">
        <title>Solution structures of the PDZ domain of human unnamed protein product.</title>
        <authorList>
            <consortium name="RIKEN structural genomics initiative (RSGI)"/>
        </authorList>
    </citation>
    <scope>STRUCTURE BY NMR OF 59-150</scope>
</reference>
<keyword id="KW-0002">3D-structure</keyword>
<keyword id="KW-0025">Alternative splicing</keyword>
<keyword id="KW-0597">Phosphoprotein</keyword>
<keyword id="KW-1267">Proteomics identification</keyword>
<keyword id="KW-1185">Reference proteome</keyword>
<accession>Q9H6Y5</accession>
<accession>A0A075B7A2</accession>
<accession>A6XND4</accession>
<accession>A8MSX9</accession>
<accession>B7WP26</accession>
<accession>Q14C81</accession>
<organism>
    <name type="scientific">Homo sapiens</name>
    <name type="common">Human</name>
    <dbReference type="NCBI Taxonomy" id="9606"/>
    <lineage>
        <taxon>Eukaryota</taxon>
        <taxon>Metazoa</taxon>
        <taxon>Chordata</taxon>
        <taxon>Craniata</taxon>
        <taxon>Vertebrata</taxon>
        <taxon>Euteleostomi</taxon>
        <taxon>Mammalia</taxon>
        <taxon>Eutheria</taxon>
        <taxon>Euarchontoglires</taxon>
        <taxon>Primates</taxon>
        <taxon>Haplorrhini</taxon>
        <taxon>Catarrhini</taxon>
        <taxon>Hominidae</taxon>
        <taxon>Homo</taxon>
    </lineage>
</organism>
<protein>
    <recommendedName>
        <fullName>PDZ domain-containing protein MAGIX</fullName>
    </recommendedName>
</protein>
<evidence type="ECO:0000250" key="1">
    <source>
        <dbReference type="UniProtKB" id="Q4KL35"/>
    </source>
</evidence>
<evidence type="ECO:0000255" key="2">
    <source>
        <dbReference type="PROSITE-ProRule" id="PRU00143"/>
    </source>
</evidence>
<evidence type="ECO:0000256" key="3">
    <source>
        <dbReference type="SAM" id="MobiDB-lite"/>
    </source>
</evidence>
<evidence type="ECO:0000303" key="4">
    <source>
    </source>
</evidence>
<evidence type="ECO:0000303" key="5">
    <source ref="1"/>
</evidence>
<evidence type="ECO:0007829" key="6">
    <source>
        <dbReference type="PDB" id="2DJT"/>
    </source>
</evidence>
<dbReference type="EMBL" id="DQ884401">
    <property type="protein sequence ID" value="ABI63368.1"/>
    <property type="molecule type" value="mRNA"/>
</dbReference>
<dbReference type="EMBL" id="AK025340">
    <property type="protein sequence ID" value="BAB15115.1"/>
    <property type="molecule type" value="mRNA"/>
</dbReference>
<dbReference type="EMBL" id="AC231657">
    <property type="status" value="NOT_ANNOTATED_CDS"/>
    <property type="molecule type" value="Genomic_DNA"/>
</dbReference>
<dbReference type="EMBL" id="AF196779">
    <property type="status" value="NOT_ANNOTATED_CDS"/>
    <property type="molecule type" value="Genomic_DNA"/>
</dbReference>
<dbReference type="EMBL" id="CH471224">
    <property type="protein sequence ID" value="EAW50691.1"/>
    <property type="molecule type" value="Genomic_DNA"/>
</dbReference>
<dbReference type="CCDS" id="CCDS48106.1">
    <molecule id="Q9H6Y5-1"/>
</dbReference>
<dbReference type="CCDS" id="CCDS94607.1">
    <molecule id="Q9H6Y5-2"/>
</dbReference>
<dbReference type="RefSeq" id="NP_001093151.2">
    <property type="nucleotide sequence ID" value="NM_001099681.2"/>
</dbReference>
<dbReference type="RefSeq" id="NP_001093152.2">
    <property type="nucleotide sequence ID" value="NM_001099682.2"/>
</dbReference>
<dbReference type="RefSeq" id="NP_001382330.1">
    <molecule id="Q9H6Y5-2"/>
    <property type="nucleotide sequence ID" value="NM_001395401.1"/>
</dbReference>
<dbReference type="RefSeq" id="NP_079135.3">
    <molecule id="Q9H6Y5-1"/>
    <property type="nucleotide sequence ID" value="NM_024859.4"/>
</dbReference>
<dbReference type="RefSeq" id="XP_005278121.1">
    <property type="nucleotide sequence ID" value="XM_005278064.4"/>
</dbReference>
<dbReference type="RefSeq" id="XP_005278122.1">
    <property type="nucleotide sequence ID" value="XM_005278065.3"/>
</dbReference>
<dbReference type="RefSeq" id="XP_011542287.1">
    <property type="nucleotide sequence ID" value="XM_011543985.2"/>
</dbReference>
<dbReference type="RefSeq" id="XP_011542288.1">
    <property type="nucleotide sequence ID" value="XM_011543986.2"/>
</dbReference>
<dbReference type="RefSeq" id="XP_011542289.1">
    <property type="nucleotide sequence ID" value="XM_011543987.2"/>
</dbReference>
<dbReference type="PDB" id="2DJT">
    <property type="method" value="NMR"/>
    <property type="chains" value="A=119-209"/>
</dbReference>
<dbReference type="PDBsum" id="2DJT"/>
<dbReference type="SMR" id="Q9H6Y5"/>
<dbReference type="BioGRID" id="122995">
    <property type="interactions" value="36"/>
</dbReference>
<dbReference type="FunCoup" id="Q9H6Y5">
    <property type="interactions" value="66"/>
</dbReference>
<dbReference type="IntAct" id="Q9H6Y5">
    <property type="interactions" value="29"/>
</dbReference>
<dbReference type="STRING" id="9606.ENSP00000471299"/>
<dbReference type="GlyGen" id="Q9H6Y5">
    <property type="glycosylation" value="1 site"/>
</dbReference>
<dbReference type="iPTMnet" id="Q9H6Y5"/>
<dbReference type="PhosphoSitePlus" id="Q9H6Y5"/>
<dbReference type="BioMuta" id="MAGIX"/>
<dbReference type="DMDM" id="209572736"/>
<dbReference type="jPOST" id="Q9H6Y5"/>
<dbReference type="MassIVE" id="Q9H6Y5"/>
<dbReference type="PaxDb" id="9606-ENSP00000471299"/>
<dbReference type="PeptideAtlas" id="Q9H6Y5"/>
<dbReference type="ProteomicsDB" id="81059">
    <molecule id="Q9H6Y5-1"/>
</dbReference>
<dbReference type="ProteomicsDB" id="81060">
    <molecule id="Q9H6Y5-2"/>
</dbReference>
<dbReference type="ProteomicsDB" id="81061">
    <molecule id="Q9H6Y5-3"/>
</dbReference>
<dbReference type="Antibodypedia" id="72948">
    <property type="antibodies" value="65 antibodies from 16 providers"/>
</dbReference>
<dbReference type="DNASU" id="79917"/>
<dbReference type="Ensembl" id="ENST00000595224.6">
    <molecule id="Q9H6Y5-1"/>
    <property type="protein sequence ID" value="ENSP00000471299.1"/>
    <property type="gene ID" value="ENSG00000269313.6"/>
</dbReference>
<dbReference type="Ensembl" id="ENST00000616266.4">
    <molecule id="Q9H6Y5-2"/>
    <property type="protein sequence ID" value="ENSP00000481198.1"/>
    <property type="gene ID" value="ENSG00000269313.6"/>
</dbReference>
<dbReference type="Ensembl" id="ENST00000710100.1">
    <molecule id="Q9H6Y5-2"/>
    <property type="protein sequence ID" value="ENSP00000518056.1"/>
    <property type="gene ID" value="ENSG00000292218.1"/>
</dbReference>
<dbReference type="Ensembl" id="ENST00000710105.1">
    <molecule id="Q9H6Y5-1"/>
    <property type="protein sequence ID" value="ENSP00000518060.1"/>
    <property type="gene ID" value="ENSG00000292218.1"/>
</dbReference>
<dbReference type="GeneID" id="79917"/>
<dbReference type="KEGG" id="hsa:79917"/>
<dbReference type="MANE-Select" id="ENST00000595224.6">
    <property type="protein sequence ID" value="ENSP00000471299.1"/>
    <property type="RefSeq nucleotide sequence ID" value="NM_024859.4"/>
    <property type="RefSeq protein sequence ID" value="NP_079135.3"/>
</dbReference>
<dbReference type="AGR" id="HGNC:30006"/>
<dbReference type="CTD" id="79917"/>
<dbReference type="GeneCards" id="MAGIX"/>
<dbReference type="HGNC" id="HGNC:30006">
    <property type="gene designation" value="MAGIX"/>
</dbReference>
<dbReference type="HPA" id="ENSG00000269313">
    <property type="expression patterns" value="Tissue enhanced (liver)"/>
</dbReference>
<dbReference type="neXtProt" id="NX_Q9H6Y5"/>
<dbReference type="OpenTargets" id="ENSG00000269313"/>
<dbReference type="PharmGKB" id="PA162394882"/>
<dbReference type="VEuPathDB" id="HostDB:ENSG00000269313"/>
<dbReference type="eggNOG" id="KOG3209">
    <property type="taxonomic scope" value="Eukaryota"/>
</dbReference>
<dbReference type="GeneTree" id="ENSGT00940000162529"/>
<dbReference type="InParanoid" id="Q9H6Y5"/>
<dbReference type="OMA" id="VEHQPQH"/>
<dbReference type="OrthoDB" id="66881at2759"/>
<dbReference type="PAN-GO" id="Q9H6Y5">
    <property type="GO annotations" value="0 GO annotations based on evolutionary models"/>
</dbReference>
<dbReference type="PhylomeDB" id="Q9H6Y5"/>
<dbReference type="TreeFam" id="TF315536"/>
<dbReference type="PathwayCommons" id="Q9H6Y5"/>
<dbReference type="SignaLink" id="Q9H6Y5"/>
<dbReference type="BioGRID-ORCS" id="79917">
    <property type="hits" value="10 hits in 754 CRISPR screens"/>
</dbReference>
<dbReference type="EvolutionaryTrace" id="Q9H6Y5"/>
<dbReference type="GenomeRNAi" id="79917"/>
<dbReference type="Pharos" id="Q9H6Y5">
    <property type="development level" value="Tdark"/>
</dbReference>
<dbReference type="PRO" id="PR:Q9H6Y5"/>
<dbReference type="Proteomes" id="UP000005640">
    <property type="component" value="Chromosome X"/>
</dbReference>
<dbReference type="RNAct" id="Q9H6Y5">
    <property type="molecule type" value="protein"/>
</dbReference>
<dbReference type="Bgee" id="ENSG00000269313">
    <property type="expression patterns" value="Expressed in right lobe of liver and 105 other cell types or tissues"/>
</dbReference>
<dbReference type="ExpressionAtlas" id="Q9H6Y5">
    <property type="expression patterns" value="baseline and differential"/>
</dbReference>
<dbReference type="CDD" id="cd06735">
    <property type="entry name" value="PDZ5_MAGI-1_3-like"/>
    <property type="match status" value="1"/>
</dbReference>
<dbReference type="Gene3D" id="2.30.42.10">
    <property type="match status" value="1"/>
</dbReference>
<dbReference type="InterPro" id="IPR030031">
    <property type="entry name" value="MAGIX"/>
</dbReference>
<dbReference type="InterPro" id="IPR001478">
    <property type="entry name" value="PDZ"/>
</dbReference>
<dbReference type="InterPro" id="IPR036034">
    <property type="entry name" value="PDZ_sf"/>
</dbReference>
<dbReference type="PANTHER" id="PTHR47646">
    <property type="entry name" value="PDZ DOMAIN-CONTAINING PROTEIN MAGIX"/>
    <property type="match status" value="1"/>
</dbReference>
<dbReference type="PANTHER" id="PTHR47646:SF1">
    <property type="entry name" value="PDZ DOMAIN-CONTAINING PROTEIN MAGIX"/>
    <property type="match status" value="1"/>
</dbReference>
<dbReference type="Pfam" id="PF00595">
    <property type="entry name" value="PDZ"/>
    <property type="match status" value="1"/>
</dbReference>
<dbReference type="SMART" id="SM00228">
    <property type="entry name" value="PDZ"/>
    <property type="match status" value="1"/>
</dbReference>
<dbReference type="SUPFAM" id="SSF50156">
    <property type="entry name" value="PDZ domain-like"/>
    <property type="match status" value="1"/>
</dbReference>
<dbReference type="PROSITE" id="PS50106">
    <property type="entry name" value="PDZ"/>
    <property type="match status" value="1"/>
</dbReference>
<name>MAGIX_HUMAN</name>
<gene>
    <name type="primary">MAGIX</name>
</gene>